<dbReference type="EMBL" id="CP000308">
    <property type="protein sequence ID" value="ABG12947.1"/>
    <property type="molecule type" value="Genomic_DNA"/>
</dbReference>
<dbReference type="SMR" id="Q1C9C5"/>
<dbReference type="KEGG" id="ypa:YPA_0980"/>
<dbReference type="Proteomes" id="UP000001971">
    <property type="component" value="Chromosome"/>
</dbReference>
<dbReference type="GO" id="GO:0043590">
    <property type="term" value="C:bacterial nucleoid"/>
    <property type="evidence" value="ECO:0007669"/>
    <property type="project" value="TreeGrafter"/>
</dbReference>
<dbReference type="GO" id="GO:0005737">
    <property type="term" value="C:cytoplasm"/>
    <property type="evidence" value="ECO:0007669"/>
    <property type="project" value="UniProtKB-UniRule"/>
</dbReference>
<dbReference type="GO" id="GO:0003690">
    <property type="term" value="F:double-stranded DNA binding"/>
    <property type="evidence" value="ECO:0007669"/>
    <property type="project" value="TreeGrafter"/>
</dbReference>
<dbReference type="GO" id="GO:0003727">
    <property type="term" value="F:single-stranded RNA binding"/>
    <property type="evidence" value="ECO:0007669"/>
    <property type="project" value="TreeGrafter"/>
</dbReference>
<dbReference type="HAMAP" id="MF_00730">
    <property type="entry name" value="NdpA"/>
    <property type="match status" value="1"/>
</dbReference>
<dbReference type="InterPro" id="IPR007358">
    <property type="entry name" value="Nucleoid_associated_NdpA"/>
</dbReference>
<dbReference type="NCBIfam" id="NF001557">
    <property type="entry name" value="PRK00378.1"/>
    <property type="match status" value="1"/>
</dbReference>
<dbReference type="PANTHER" id="PTHR38772">
    <property type="match status" value="1"/>
</dbReference>
<dbReference type="PANTHER" id="PTHR38772:SF1">
    <property type="entry name" value="NUCLEOID-ASSOCIATED PROTEIN YEJK"/>
    <property type="match status" value="1"/>
</dbReference>
<dbReference type="Pfam" id="PF04245">
    <property type="entry name" value="NA37"/>
    <property type="match status" value="1"/>
</dbReference>
<keyword id="KW-0963">Cytoplasm</keyword>
<proteinExistence type="inferred from homology"/>
<gene>
    <name type="ordered locus">YPA_0980</name>
</gene>
<protein>
    <recommendedName>
        <fullName evidence="1">Nucleoid-associated protein YPA_0980</fullName>
    </recommendedName>
</protein>
<reference key="1">
    <citation type="journal article" date="2006" name="J. Bacteriol.">
        <title>Complete genome sequence of Yersinia pestis strains Antiqua and Nepal516: evidence of gene reduction in an emerging pathogen.</title>
        <authorList>
            <person name="Chain P.S.G."/>
            <person name="Hu P."/>
            <person name="Malfatti S.A."/>
            <person name="Radnedge L."/>
            <person name="Larimer F."/>
            <person name="Vergez L.M."/>
            <person name="Worsham P."/>
            <person name="Chu M.C."/>
            <person name="Andersen G.L."/>
        </authorList>
    </citation>
    <scope>NUCLEOTIDE SEQUENCE [LARGE SCALE GENOMIC DNA]</scope>
    <source>
        <strain>Antiqua</strain>
    </source>
</reference>
<sequence>MSLDIDQIALHQLIKRDEQTLDVVLRDSLLPTNAVVEEMMAELHRVYSAKSKAYGLFNEQSELADALKRSRKGDEDFLSFSRAATGRLRDELAKYPFAEGGVVLFCQYRYLAVEYLLISVLSSCHSMRVNEQLDLSTTHYLDINRADIVARIDLTEWETNPESTRYLTFLKGRVGRKVSDFFMDFLSAAEGLDTKAQNRGLLQAVDDYCADAELGKNERQAYRQQVYSYCNEQLQAGEEIALQVLAQELPKLGEKDFQQFSAEQGYALEESFPADRGTLRQLTKFAGSGGGLSINFDALLLDERIFWDAATDTLTIKGTPPNLRDQLQRRAGSK</sequence>
<organism>
    <name type="scientific">Yersinia pestis bv. Antiqua (strain Antiqua)</name>
    <dbReference type="NCBI Taxonomy" id="360102"/>
    <lineage>
        <taxon>Bacteria</taxon>
        <taxon>Pseudomonadati</taxon>
        <taxon>Pseudomonadota</taxon>
        <taxon>Gammaproteobacteria</taxon>
        <taxon>Enterobacterales</taxon>
        <taxon>Yersiniaceae</taxon>
        <taxon>Yersinia</taxon>
    </lineage>
</organism>
<feature type="chain" id="PRO_1000045958" description="Nucleoid-associated protein YPA_0980">
    <location>
        <begin position="1"/>
        <end position="334"/>
    </location>
</feature>
<comment type="subcellular location">
    <subcellularLocation>
        <location evidence="1">Cytoplasm</location>
        <location evidence="1">Nucleoid</location>
    </subcellularLocation>
</comment>
<comment type="similarity">
    <text evidence="1">Belongs to the YejK family.</text>
</comment>
<evidence type="ECO:0000255" key="1">
    <source>
        <dbReference type="HAMAP-Rule" id="MF_00730"/>
    </source>
</evidence>
<accession>Q1C9C5</accession>
<name>NDPA_YERPA</name>